<gene>
    <name evidence="1" type="primary">surE</name>
    <name type="ordered locus">BP1719</name>
</gene>
<reference key="1">
    <citation type="journal article" date="2003" name="Nat. Genet.">
        <title>Comparative analysis of the genome sequences of Bordetella pertussis, Bordetella parapertussis and Bordetella bronchiseptica.</title>
        <authorList>
            <person name="Parkhill J."/>
            <person name="Sebaihia M."/>
            <person name="Preston A."/>
            <person name="Murphy L.D."/>
            <person name="Thomson N.R."/>
            <person name="Harris D.E."/>
            <person name="Holden M.T.G."/>
            <person name="Churcher C.M."/>
            <person name="Bentley S.D."/>
            <person name="Mungall K.L."/>
            <person name="Cerdeno-Tarraga A.-M."/>
            <person name="Temple L."/>
            <person name="James K.D."/>
            <person name="Harris B."/>
            <person name="Quail M.A."/>
            <person name="Achtman M."/>
            <person name="Atkin R."/>
            <person name="Baker S."/>
            <person name="Basham D."/>
            <person name="Bason N."/>
            <person name="Cherevach I."/>
            <person name="Chillingworth T."/>
            <person name="Collins M."/>
            <person name="Cronin A."/>
            <person name="Davis P."/>
            <person name="Doggett J."/>
            <person name="Feltwell T."/>
            <person name="Goble A."/>
            <person name="Hamlin N."/>
            <person name="Hauser H."/>
            <person name="Holroyd S."/>
            <person name="Jagels K."/>
            <person name="Leather S."/>
            <person name="Moule S."/>
            <person name="Norberczak H."/>
            <person name="O'Neil S."/>
            <person name="Ormond D."/>
            <person name="Price C."/>
            <person name="Rabbinowitsch E."/>
            <person name="Rutter S."/>
            <person name="Sanders M."/>
            <person name="Saunders D."/>
            <person name="Seeger K."/>
            <person name="Sharp S."/>
            <person name="Simmonds M."/>
            <person name="Skelton J."/>
            <person name="Squares R."/>
            <person name="Squares S."/>
            <person name="Stevens K."/>
            <person name="Unwin L."/>
            <person name="Whitehead S."/>
            <person name="Barrell B.G."/>
            <person name="Maskell D.J."/>
        </authorList>
    </citation>
    <scope>NUCLEOTIDE SEQUENCE [LARGE SCALE GENOMIC DNA]</scope>
    <source>
        <strain>Tohama I / ATCC BAA-589 / NCTC 13251</strain>
    </source>
</reference>
<keyword id="KW-0963">Cytoplasm</keyword>
<keyword id="KW-0378">Hydrolase</keyword>
<keyword id="KW-0479">Metal-binding</keyword>
<keyword id="KW-0547">Nucleotide-binding</keyword>
<keyword id="KW-1185">Reference proteome</keyword>
<feature type="chain" id="PRO_0000111792" description="5'-nucleotidase SurE">
    <location>
        <begin position="1"/>
        <end position="252"/>
    </location>
</feature>
<feature type="binding site" evidence="1">
    <location>
        <position position="8"/>
    </location>
    <ligand>
        <name>a divalent metal cation</name>
        <dbReference type="ChEBI" id="CHEBI:60240"/>
    </ligand>
</feature>
<feature type="binding site" evidence="1">
    <location>
        <position position="9"/>
    </location>
    <ligand>
        <name>a divalent metal cation</name>
        <dbReference type="ChEBI" id="CHEBI:60240"/>
    </ligand>
</feature>
<feature type="binding site" evidence="1">
    <location>
        <position position="39"/>
    </location>
    <ligand>
        <name>a divalent metal cation</name>
        <dbReference type="ChEBI" id="CHEBI:60240"/>
    </ligand>
</feature>
<feature type="binding site" evidence="1">
    <location>
        <position position="91"/>
    </location>
    <ligand>
        <name>a divalent metal cation</name>
        <dbReference type="ChEBI" id="CHEBI:60240"/>
    </ligand>
</feature>
<dbReference type="EC" id="3.1.3.5" evidence="1"/>
<dbReference type="EMBL" id="BX640416">
    <property type="protein sequence ID" value="CAE42006.1"/>
    <property type="molecule type" value="Genomic_DNA"/>
</dbReference>
<dbReference type="RefSeq" id="NP_880434.1">
    <property type="nucleotide sequence ID" value="NC_002929.2"/>
</dbReference>
<dbReference type="RefSeq" id="WP_010930526.1">
    <property type="nucleotide sequence ID" value="NZ_CP039022.1"/>
</dbReference>
<dbReference type="SMR" id="Q7VXN2"/>
<dbReference type="STRING" id="257313.BP1719"/>
<dbReference type="PaxDb" id="257313-BP1719"/>
<dbReference type="GeneID" id="69602104"/>
<dbReference type="KEGG" id="bpe:BP1719"/>
<dbReference type="PATRIC" id="fig|257313.5.peg.1844"/>
<dbReference type="eggNOG" id="COG0496">
    <property type="taxonomic scope" value="Bacteria"/>
</dbReference>
<dbReference type="HOGENOM" id="CLU_045192_1_2_4"/>
<dbReference type="Proteomes" id="UP000002676">
    <property type="component" value="Chromosome"/>
</dbReference>
<dbReference type="GO" id="GO:0005737">
    <property type="term" value="C:cytoplasm"/>
    <property type="evidence" value="ECO:0007669"/>
    <property type="project" value="UniProtKB-SubCell"/>
</dbReference>
<dbReference type="GO" id="GO:0008254">
    <property type="term" value="F:3'-nucleotidase activity"/>
    <property type="evidence" value="ECO:0007669"/>
    <property type="project" value="TreeGrafter"/>
</dbReference>
<dbReference type="GO" id="GO:0008253">
    <property type="term" value="F:5'-nucleotidase activity"/>
    <property type="evidence" value="ECO:0007669"/>
    <property type="project" value="UniProtKB-UniRule"/>
</dbReference>
<dbReference type="GO" id="GO:0004309">
    <property type="term" value="F:exopolyphosphatase activity"/>
    <property type="evidence" value="ECO:0007669"/>
    <property type="project" value="TreeGrafter"/>
</dbReference>
<dbReference type="GO" id="GO:0046872">
    <property type="term" value="F:metal ion binding"/>
    <property type="evidence" value="ECO:0007669"/>
    <property type="project" value="UniProtKB-UniRule"/>
</dbReference>
<dbReference type="GO" id="GO:0000166">
    <property type="term" value="F:nucleotide binding"/>
    <property type="evidence" value="ECO:0007669"/>
    <property type="project" value="UniProtKB-KW"/>
</dbReference>
<dbReference type="FunFam" id="3.40.1210.10:FF:000001">
    <property type="entry name" value="5'/3'-nucleotidase SurE"/>
    <property type="match status" value="1"/>
</dbReference>
<dbReference type="Gene3D" id="3.40.1210.10">
    <property type="entry name" value="Survival protein SurE-like phosphatase/nucleotidase"/>
    <property type="match status" value="1"/>
</dbReference>
<dbReference type="HAMAP" id="MF_00060">
    <property type="entry name" value="SurE"/>
    <property type="match status" value="1"/>
</dbReference>
<dbReference type="InterPro" id="IPR030048">
    <property type="entry name" value="SurE"/>
</dbReference>
<dbReference type="InterPro" id="IPR002828">
    <property type="entry name" value="SurE-like_Pase/nucleotidase"/>
</dbReference>
<dbReference type="InterPro" id="IPR036523">
    <property type="entry name" value="SurE-like_sf"/>
</dbReference>
<dbReference type="NCBIfam" id="NF001489">
    <property type="entry name" value="PRK00346.1-3"/>
    <property type="match status" value="1"/>
</dbReference>
<dbReference type="NCBIfam" id="NF001490">
    <property type="entry name" value="PRK00346.1-4"/>
    <property type="match status" value="1"/>
</dbReference>
<dbReference type="NCBIfam" id="TIGR00087">
    <property type="entry name" value="surE"/>
    <property type="match status" value="1"/>
</dbReference>
<dbReference type="PANTHER" id="PTHR30457">
    <property type="entry name" value="5'-NUCLEOTIDASE SURE"/>
    <property type="match status" value="1"/>
</dbReference>
<dbReference type="PANTHER" id="PTHR30457:SF12">
    <property type="entry name" value="5'_3'-NUCLEOTIDASE SURE"/>
    <property type="match status" value="1"/>
</dbReference>
<dbReference type="Pfam" id="PF01975">
    <property type="entry name" value="SurE"/>
    <property type="match status" value="1"/>
</dbReference>
<dbReference type="SUPFAM" id="SSF64167">
    <property type="entry name" value="SurE-like"/>
    <property type="match status" value="1"/>
</dbReference>
<name>SURE_BORPE</name>
<comment type="function">
    <text evidence="1">Nucleotidase that shows phosphatase activity on nucleoside 5'-monophosphates.</text>
</comment>
<comment type="catalytic activity">
    <reaction evidence="1">
        <text>a ribonucleoside 5'-phosphate + H2O = a ribonucleoside + phosphate</text>
        <dbReference type="Rhea" id="RHEA:12484"/>
        <dbReference type="ChEBI" id="CHEBI:15377"/>
        <dbReference type="ChEBI" id="CHEBI:18254"/>
        <dbReference type="ChEBI" id="CHEBI:43474"/>
        <dbReference type="ChEBI" id="CHEBI:58043"/>
        <dbReference type="EC" id="3.1.3.5"/>
    </reaction>
</comment>
<comment type="cofactor">
    <cofactor evidence="1">
        <name>a divalent metal cation</name>
        <dbReference type="ChEBI" id="CHEBI:60240"/>
    </cofactor>
    <text evidence="1">Binds 1 divalent metal cation per subunit.</text>
</comment>
<comment type="subcellular location">
    <subcellularLocation>
        <location evidence="1">Cytoplasm</location>
    </subcellularLocation>
</comment>
<comment type="similarity">
    <text evidence="1">Belongs to the SurE nucleotidase family.</text>
</comment>
<accession>Q7VXN2</accession>
<protein>
    <recommendedName>
        <fullName evidence="1">5'-nucleotidase SurE</fullName>
        <ecNumber evidence="1">3.1.3.5</ecNumber>
    </recommendedName>
    <alternativeName>
        <fullName evidence="1">Nucleoside 5'-monophosphate phosphohydrolase</fullName>
    </alternativeName>
</protein>
<evidence type="ECO:0000255" key="1">
    <source>
        <dbReference type="HAMAP-Rule" id="MF_00060"/>
    </source>
</evidence>
<sequence>MRILVSNDDGYNAPGLEALVEALSGLGELTVVAPETNHSGASNSLTLNRPLTVRTAANGFIYVNGTPSDCVHVALTGLMDARPDLVVSGINNGANMGDDTLYSGTVAAASEGYLFGIPSIAFSLIEKGWQHIESAARAARQVVERQIAQPLAAPVLLNVNIPNRRYEDMKGYAVTRLGKRHPSEPVVRTTTPYGDTVYWVGPVGLAADATPGTDFHATAQGQVSVTPLRLDLTQHSQLDDVRNWAEPLCVNA</sequence>
<organism>
    <name type="scientific">Bordetella pertussis (strain Tohama I / ATCC BAA-589 / NCTC 13251)</name>
    <dbReference type="NCBI Taxonomy" id="257313"/>
    <lineage>
        <taxon>Bacteria</taxon>
        <taxon>Pseudomonadati</taxon>
        <taxon>Pseudomonadota</taxon>
        <taxon>Betaproteobacteria</taxon>
        <taxon>Burkholderiales</taxon>
        <taxon>Alcaligenaceae</taxon>
        <taxon>Bordetella</taxon>
    </lineage>
</organism>
<proteinExistence type="inferred from homology"/>